<keyword id="KW-0067">ATP-binding</keyword>
<keyword id="KW-0319">Glycerol metabolism</keyword>
<keyword id="KW-0418">Kinase</keyword>
<keyword id="KW-0547">Nucleotide-binding</keyword>
<keyword id="KW-1185">Reference proteome</keyword>
<keyword id="KW-0808">Transferase</keyword>
<reference key="1">
    <citation type="journal article" date="1998" name="Science">
        <title>Genome sequence of the nematode C. elegans: a platform for investigating biology.</title>
        <authorList>
            <consortium name="The C. elegans sequencing consortium"/>
        </authorList>
    </citation>
    <scope>NUCLEOTIDE SEQUENCE [LARGE SCALE GENOMIC DNA]</scope>
    <source>
        <strain>Bristol N2</strain>
    </source>
</reference>
<organism>
    <name type="scientific">Caenorhabditis elegans</name>
    <dbReference type="NCBI Taxonomy" id="6239"/>
    <lineage>
        <taxon>Eukaryota</taxon>
        <taxon>Metazoa</taxon>
        <taxon>Ecdysozoa</taxon>
        <taxon>Nematoda</taxon>
        <taxon>Chromadorea</taxon>
        <taxon>Rhabditida</taxon>
        <taxon>Rhabditina</taxon>
        <taxon>Rhabditomorpha</taxon>
        <taxon>Rhabditoidea</taxon>
        <taxon>Rhabditidae</taxon>
        <taxon>Peloderinae</taxon>
        <taxon>Caenorhabditis</taxon>
    </lineage>
</organism>
<comment type="catalytic activity">
    <reaction>
        <text>glycerol + ATP = sn-glycerol 3-phosphate + ADP + H(+)</text>
        <dbReference type="Rhea" id="RHEA:21644"/>
        <dbReference type="ChEBI" id="CHEBI:15378"/>
        <dbReference type="ChEBI" id="CHEBI:17754"/>
        <dbReference type="ChEBI" id="CHEBI:30616"/>
        <dbReference type="ChEBI" id="CHEBI:57597"/>
        <dbReference type="ChEBI" id="CHEBI:456216"/>
        <dbReference type="EC" id="2.7.1.30"/>
    </reaction>
</comment>
<comment type="pathway">
    <text>Polyol metabolism; glycerol degradation via glycerol kinase pathway; sn-glycerol 3-phosphate from glycerol: step 1/1.</text>
</comment>
<comment type="similarity">
    <text evidence="2">Belongs to the FGGY kinase family.</text>
</comment>
<evidence type="ECO:0000250" key="1"/>
<evidence type="ECO:0000305" key="2"/>
<proteinExistence type="inferred from homology"/>
<feature type="chain" id="PRO_0000059540" description="Probable glycerol kinase">
    <location>
        <begin position="1"/>
        <end position="502"/>
    </location>
</feature>
<feature type="binding site" evidence="1">
    <location>
        <position position="11"/>
    </location>
    <ligand>
        <name>substrate</name>
    </ligand>
</feature>
<feature type="binding site" evidence="1">
    <location>
        <position position="15"/>
    </location>
    <ligand>
        <name>ATP</name>
        <dbReference type="ChEBI" id="CHEBI:30616"/>
    </ligand>
</feature>
<feature type="binding site" evidence="1">
    <location>
        <position position="85"/>
    </location>
    <ligand>
        <name>substrate</name>
    </ligand>
</feature>
<feature type="binding site" evidence="1">
    <location>
        <position position="140"/>
    </location>
    <ligand>
        <name>substrate</name>
    </ligand>
</feature>
<feature type="binding site" evidence="1">
    <location>
        <position position="246"/>
    </location>
    <ligand>
        <name>substrate</name>
    </ligand>
</feature>
<feature type="binding site" evidence="1">
    <location>
        <position position="268"/>
    </location>
    <ligand>
        <name>ATP</name>
        <dbReference type="ChEBI" id="CHEBI:30616"/>
    </ligand>
</feature>
<feature type="binding site" evidence="1">
    <location>
        <position position="313"/>
    </location>
    <ligand>
        <name>ATP</name>
        <dbReference type="ChEBI" id="CHEBI:30616"/>
    </ligand>
</feature>
<feature type="binding site" evidence="1">
    <location>
        <begin position="416"/>
        <end position="420"/>
    </location>
    <ligand>
        <name>ATP</name>
        <dbReference type="ChEBI" id="CHEBI:30616"/>
    </ligand>
</feature>
<protein>
    <recommendedName>
        <fullName>Probable glycerol kinase</fullName>
        <shortName>GK</shortName>
        <shortName>Glycerokinase</shortName>
        <ecNumber>2.7.1.30</ecNumber>
    </recommendedName>
    <alternativeName>
        <fullName>ATP:glycerol 3-phosphotransferase</fullName>
    </alternativeName>
</protein>
<accession>Q21944</accession>
<sequence length="502" mass="55165">MVLLAAIDQGTSSSRFLVFEADTGELVTSHQIEVRQLFPHGGWVEMDPMELYDTVVSCISKTIEKLENLGISADEIKSVGVANQRETSIVWDKETGKPLYNAIVWLDTRTSSLADEAISRTASKSKDEFRAKTGLPIHPYFSALKLKWLFQNVPEVKKAYADGNLMFGTVDTWLIWKLTGAYVTDVSNASRTLLLDLHKRKWSTQLCEFFDLPIEILPEIRSSAEVYGHFDKGPLEGVPLSGCLGDQQAAMVGHQCLNAGQTKNTYGTGTFMLCNIGTRPIISKNGLLTTVGFQFGADSPVVYALEGSGSIGGNVVRFLRDNFKFISDAKEMEGLCRSVEDTSGAYFVPSFTGLYTPYWDSTARGTILGLTQVTQREHICLAALRAVAFQSAEMIAAVEQDLEGGTKVTTLKVDGGMIANKLFNEIQADIMGRDIVTPKITEISGWGAAVAGGIGAQQISLDEFLQQSSEDNRYTPQKDDNWRSAELARWKEAVKRSCGWAQ</sequence>
<name>GLPK_CAEEL</name>
<dbReference type="EC" id="2.7.1.30"/>
<dbReference type="EMBL" id="FO081682">
    <property type="protein sequence ID" value="CCD73301.1"/>
    <property type="molecule type" value="Genomic_DNA"/>
</dbReference>
<dbReference type="PIR" id="T16716">
    <property type="entry name" value="T16716"/>
</dbReference>
<dbReference type="RefSeq" id="NP_494721.1">
    <property type="nucleotide sequence ID" value="NM_062320.5"/>
</dbReference>
<dbReference type="SMR" id="Q21944"/>
<dbReference type="BioGRID" id="39103">
    <property type="interactions" value="1"/>
</dbReference>
<dbReference type="DIP" id="DIP-26828N"/>
<dbReference type="FunCoup" id="Q21944">
    <property type="interactions" value="1455"/>
</dbReference>
<dbReference type="STRING" id="6239.R11F4.1.2"/>
<dbReference type="PaxDb" id="6239-R11F4.1.2"/>
<dbReference type="PeptideAtlas" id="Q21944"/>
<dbReference type="EnsemblMetazoa" id="R11F4.1.1">
    <property type="protein sequence ID" value="R11F4.1.1"/>
    <property type="gene ID" value="WBGene00020007"/>
</dbReference>
<dbReference type="GeneID" id="173747"/>
<dbReference type="KEGG" id="cel:CELE_R11F4.1"/>
<dbReference type="UCSC" id="R11F4.1.1">
    <property type="organism name" value="c. elegans"/>
</dbReference>
<dbReference type="AGR" id="WB:WBGene00020007"/>
<dbReference type="CTD" id="173747"/>
<dbReference type="WormBase" id="R11F4.1">
    <property type="protein sequence ID" value="CE04828"/>
    <property type="gene ID" value="WBGene00020007"/>
</dbReference>
<dbReference type="eggNOG" id="KOG2517">
    <property type="taxonomic scope" value="Eukaryota"/>
</dbReference>
<dbReference type="GeneTree" id="ENSGT01000000214434"/>
<dbReference type="HOGENOM" id="CLU_009281_2_2_1"/>
<dbReference type="InParanoid" id="Q21944"/>
<dbReference type="OMA" id="HKTDATN"/>
<dbReference type="OrthoDB" id="5422795at2759"/>
<dbReference type="PhylomeDB" id="Q21944"/>
<dbReference type="Reactome" id="R-CEL-75109">
    <property type="pathway name" value="Triglyceride biosynthesis"/>
</dbReference>
<dbReference type="UniPathway" id="UPA00618">
    <property type="reaction ID" value="UER00672"/>
</dbReference>
<dbReference type="PRO" id="PR:Q21944"/>
<dbReference type="Proteomes" id="UP000001940">
    <property type="component" value="Chromosome II"/>
</dbReference>
<dbReference type="Bgee" id="WBGene00020007">
    <property type="expression patterns" value="Expressed in larva and 3 other cell types or tissues"/>
</dbReference>
<dbReference type="GO" id="GO:0005739">
    <property type="term" value="C:mitochondrion"/>
    <property type="evidence" value="ECO:0000318"/>
    <property type="project" value="GO_Central"/>
</dbReference>
<dbReference type="GO" id="GO:0005524">
    <property type="term" value="F:ATP binding"/>
    <property type="evidence" value="ECO:0007669"/>
    <property type="project" value="UniProtKB-KW"/>
</dbReference>
<dbReference type="GO" id="GO:0004370">
    <property type="term" value="F:glycerol kinase activity"/>
    <property type="evidence" value="ECO:0000318"/>
    <property type="project" value="GO_Central"/>
</dbReference>
<dbReference type="GO" id="GO:0019563">
    <property type="term" value="P:glycerol catabolic process"/>
    <property type="evidence" value="ECO:0007669"/>
    <property type="project" value="UniProtKB-UniPathway"/>
</dbReference>
<dbReference type="GO" id="GO:0006071">
    <property type="term" value="P:glycerol metabolic process"/>
    <property type="evidence" value="ECO:0000318"/>
    <property type="project" value="GO_Central"/>
</dbReference>
<dbReference type="GO" id="GO:0046167">
    <property type="term" value="P:glycerol-3-phosphate biosynthetic process"/>
    <property type="evidence" value="ECO:0000318"/>
    <property type="project" value="GO_Central"/>
</dbReference>
<dbReference type="GO" id="GO:0006641">
    <property type="term" value="P:triglyceride metabolic process"/>
    <property type="evidence" value="ECO:0000318"/>
    <property type="project" value="GO_Central"/>
</dbReference>
<dbReference type="CDD" id="cd07792">
    <property type="entry name" value="ASKHA_NBD_FGGY_GK1-3-like"/>
    <property type="match status" value="1"/>
</dbReference>
<dbReference type="FunFam" id="3.30.420.40:FF:000177">
    <property type="entry name" value="Glycerol kinase"/>
    <property type="match status" value="1"/>
</dbReference>
<dbReference type="FunFam" id="3.30.420.40:FF:000108">
    <property type="entry name" value="Glycerol kinase, glycosomal"/>
    <property type="match status" value="1"/>
</dbReference>
<dbReference type="Gene3D" id="3.30.420.40">
    <property type="match status" value="2"/>
</dbReference>
<dbReference type="InterPro" id="IPR043129">
    <property type="entry name" value="ATPase_NBD"/>
</dbReference>
<dbReference type="InterPro" id="IPR000577">
    <property type="entry name" value="Carb_kinase_FGGY"/>
</dbReference>
<dbReference type="InterPro" id="IPR018483">
    <property type="entry name" value="Carb_kinase_FGGY_CS"/>
</dbReference>
<dbReference type="InterPro" id="IPR018485">
    <property type="entry name" value="FGGY_C"/>
</dbReference>
<dbReference type="InterPro" id="IPR018484">
    <property type="entry name" value="FGGY_N"/>
</dbReference>
<dbReference type="InterPro" id="IPR042018">
    <property type="entry name" value="GK1-3_metazoan-type"/>
</dbReference>
<dbReference type="InterPro" id="IPR005999">
    <property type="entry name" value="Glycerol_kin"/>
</dbReference>
<dbReference type="NCBIfam" id="TIGR01311">
    <property type="entry name" value="glycerol_kin"/>
    <property type="match status" value="1"/>
</dbReference>
<dbReference type="NCBIfam" id="NF000756">
    <property type="entry name" value="PRK00047.1"/>
    <property type="match status" value="1"/>
</dbReference>
<dbReference type="PANTHER" id="PTHR10196:SF69">
    <property type="entry name" value="GLYCEROL KINASE"/>
    <property type="match status" value="1"/>
</dbReference>
<dbReference type="PANTHER" id="PTHR10196">
    <property type="entry name" value="SUGAR KINASE"/>
    <property type="match status" value="1"/>
</dbReference>
<dbReference type="Pfam" id="PF02782">
    <property type="entry name" value="FGGY_C"/>
    <property type="match status" value="1"/>
</dbReference>
<dbReference type="Pfam" id="PF00370">
    <property type="entry name" value="FGGY_N"/>
    <property type="match status" value="1"/>
</dbReference>
<dbReference type="PIRSF" id="PIRSF000538">
    <property type="entry name" value="GlpK"/>
    <property type="match status" value="1"/>
</dbReference>
<dbReference type="SUPFAM" id="SSF53067">
    <property type="entry name" value="Actin-like ATPase domain"/>
    <property type="match status" value="2"/>
</dbReference>
<dbReference type="PROSITE" id="PS00933">
    <property type="entry name" value="FGGY_KINASES_1"/>
    <property type="match status" value="1"/>
</dbReference>
<gene>
    <name type="ORF">R11F4.1</name>
</gene>